<feature type="chain" id="PRO_1000008524" description="Holo-[acyl-carrier-protein] synthase">
    <location>
        <begin position="1"/>
        <end position="126"/>
    </location>
</feature>
<feature type="binding site" evidence="1">
    <location>
        <position position="9"/>
    </location>
    <ligand>
        <name>Mg(2+)</name>
        <dbReference type="ChEBI" id="CHEBI:18420"/>
    </ligand>
</feature>
<feature type="binding site" evidence="1">
    <location>
        <position position="58"/>
    </location>
    <ligand>
        <name>Mg(2+)</name>
        <dbReference type="ChEBI" id="CHEBI:18420"/>
    </ligand>
</feature>
<protein>
    <recommendedName>
        <fullName evidence="1">Holo-[acyl-carrier-protein] synthase</fullName>
        <shortName evidence="1">Holo-ACP synthase</shortName>
        <ecNumber evidence="1">2.7.8.7</ecNumber>
    </recommendedName>
    <alternativeName>
        <fullName evidence="1">4'-phosphopantetheinyl transferase AcpS</fullName>
    </alternativeName>
</protein>
<sequence>MAILGLGTDIAEIERIEKALGRTGEPFAKRILSEDEVIKFAELKQKGRYLAKRFAVKEAASKALGTGIAKGVTFHDFTVSNDEFGKPILTLSGVAKQIAESMGVNHVHLSISDERHYAVATVIFES</sequence>
<dbReference type="EC" id="2.7.8.7" evidence="1"/>
<dbReference type="EMBL" id="CP000789">
    <property type="protein sequence ID" value="ABU72468.1"/>
    <property type="molecule type" value="Genomic_DNA"/>
</dbReference>
<dbReference type="RefSeq" id="WP_012128917.1">
    <property type="nucleotide sequence ID" value="NC_009783.1"/>
</dbReference>
<dbReference type="SMR" id="A7MZA4"/>
<dbReference type="KEGG" id="vha:VIBHAR_03532"/>
<dbReference type="PATRIC" id="fig|338187.25.peg.2678"/>
<dbReference type="Proteomes" id="UP000008152">
    <property type="component" value="Chromosome I"/>
</dbReference>
<dbReference type="GO" id="GO:0005737">
    <property type="term" value="C:cytoplasm"/>
    <property type="evidence" value="ECO:0007669"/>
    <property type="project" value="UniProtKB-SubCell"/>
</dbReference>
<dbReference type="GO" id="GO:0008897">
    <property type="term" value="F:holo-[acyl-carrier-protein] synthase activity"/>
    <property type="evidence" value="ECO:0007669"/>
    <property type="project" value="UniProtKB-UniRule"/>
</dbReference>
<dbReference type="GO" id="GO:0000287">
    <property type="term" value="F:magnesium ion binding"/>
    <property type="evidence" value="ECO:0007669"/>
    <property type="project" value="UniProtKB-UniRule"/>
</dbReference>
<dbReference type="GO" id="GO:0006633">
    <property type="term" value="P:fatty acid biosynthetic process"/>
    <property type="evidence" value="ECO:0007669"/>
    <property type="project" value="UniProtKB-UniRule"/>
</dbReference>
<dbReference type="FunFam" id="3.90.470.20:FF:000001">
    <property type="entry name" value="Holo-[acyl-carrier-protein] synthase"/>
    <property type="match status" value="1"/>
</dbReference>
<dbReference type="Gene3D" id="3.90.470.20">
    <property type="entry name" value="4'-phosphopantetheinyl transferase domain"/>
    <property type="match status" value="1"/>
</dbReference>
<dbReference type="HAMAP" id="MF_00101">
    <property type="entry name" value="AcpS"/>
    <property type="match status" value="1"/>
</dbReference>
<dbReference type="InterPro" id="IPR008278">
    <property type="entry name" value="4-PPantetheinyl_Trfase_dom"/>
</dbReference>
<dbReference type="InterPro" id="IPR037143">
    <property type="entry name" value="4-PPantetheinyl_Trfase_dom_sf"/>
</dbReference>
<dbReference type="InterPro" id="IPR002582">
    <property type="entry name" value="ACPS"/>
</dbReference>
<dbReference type="InterPro" id="IPR004568">
    <property type="entry name" value="Ppantetheine-prot_Trfase_dom"/>
</dbReference>
<dbReference type="NCBIfam" id="TIGR00516">
    <property type="entry name" value="acpS"/>
    <property type="match status" value="1"/>
</dbReference>
<dbReference type="NCBIfam" id="TIGR00556">
    <property type="entry name" value="pantethn_trn"/>
    <property type="match status" value="1"/>
</dbReference>
<dbReference type="Pfam" id="PF01648">
    <property type="entry name" value="ACPS"/>
    <property type="match status" value="1"/>
</dbReference>
<dbReference type="SUPFAM" id="SSF56214">
    <property type="entry name" value="4'-phosphopantetheinyl transferase"/>
    <property type="match status" value="1"/>
</dbReference>
<evidence type="ECO:0000255" key="1">
    <source>
        <dbReference type="HAMAP-Rule" id="MF_00101"/>
    </source>
</evidence>
<organism>
    <name type="scientific">Vibrio campbellii (strain ATCC BAA-1116)</name>
    <dbReference type="NCBI Taxonomy" id="2902295"/>
    <lineage>
        <taxon>Bacteria</taxon>
        <taxon>Pseudomonadati</taxon>
        <taxon>Pseudomonadota</taxon>
        <taxon>Gammaproteobacteria</taxon>
        <taxon>Vibrionales</taxon>
        <taxon>Vibrionaceae</taxon>
        <taxon>Vibrio</taxon>
    </lineage>
</organism>
<keyword id="KW-0963">Cytoplasm</keyword>
<keyword id="KW-0275">Fatty acid biosynthesis</keyword>
<keyword id="KW-0276">Fatty acid metabolism</keyword>
<keyword id="KW-0444">Lipid biosynthesis</keyword>
<keyword id="KW-0443">Lipid metabolism</keyword>
<keyword id="KW-0460">Magnesium</keyword>
<keyword id="KW-0479">Metal-binding</keyword>
<keyword id="KW-0808">Transferase</keyword>
<proteinExistence type="inferred from homology"/>
<comment type="function">
    <text evidence="1">Transfers the 4'-phosphopantetheine moiety from coenzyme A to a Ser of acyl-carrier-protein.</text>
</comment>
<comment type="catalytic activity">
    <reaction evidence="1">
        <text>apo-[ACP] + CoA = holo-[ACP] + adenosine 3',5'-bisphosphate + H(+)</text>
        <dbReference type="Rhea" id="RHEA:12068"/>
        <dbReference type="Rhea" id="RHEA-COMP:9685"/>
        <dbReference type="Rhea" id="RHEA-COMP:9690"/>
        <dbReference type="ChEBI" id="CHEBI:15378"/>
        <dbReference type="ChEBI" id="CHEBI:29999"/>
        <dbReference type="ChEBI" id="CHEBI:57287"/>
        <dbReference type="ChEBI" id="CHEBI:58343"/>
        <dbReference type="ChEBI" id="CHEBI:64479"/>
        <dbReference type="EC" id="2.7.8.7"/>
    </reaction>
</comment>
<comment type="cofactor">
    <cofactor evidence="1">
        <name>Mg(2+)</name>
        <dbReference type="ChEBI" id="CHEBI:18420"/>
    </cofactor>
</comment>
<comment type="subcellular location">
    <subcellularLocation>
        <location evidence="1">Cytoplasm</location>
    </subcellularLocation>
</comment>
<comment type="similarity">
    <text evidence="1">Belongs to the P-Pant transferase superfamily. AcpS family.</text>
</comment>
<reference key="1">
    <citation type="submission" date="2007-08" db="EMBL/GenBank/DDBJ databases">
        <authorList>
            <consortium name="The Vibrio harveyi Genome Sequencing Project"/>
            <person name="Bassler B."/>
            <person name="Clifton S.W."/>
            <person name="Fulton L."/>
            <person name="Delehaunty K."/>
            <person name="Fronick C."/>
            <person name="Harrison M."/>
            <person name="Markivic C."/>
            <person name="Fulton R."/>
            <person name="Tin-Wollam A.-M."/>
            <person name="Shah N."/>
            <person name="Pepin K."/>
            <person name="Nash W."/>
            <person name="Thiruvilangam P."/>
            <person name="Bhonagiri V."/>
            <person name="Waters C."/>
            <person name="Tu K.C."/>
            <person name="Irgon J."/>
            <person name="Wilson R.K."/>
        </authorList>
    </citation>
    <scope>NUCLEOTIDE SEQUENCE [LARGE SCALE GENOMIC DNA]</scope>
    <source>
        <strain>ATCC BAA-1116 / BB120</strain>
    </source>
</reference>
<accession>A7MZA4</accession>
<name>ACPS_VIBC1</name>
<gene>
    <name evidence="1" type="primary">acpS</name>
    <name type="ordered locus">VIBHAR_03532</name>
</gene>